<protein>
    <recommendedName>
        <fullName evidence="3">Secreted RxLR effector protein 21</fullName>
    </recommendedName>
</protein>
<sequence>MNLSTLLLTLACISQLHGGSANQATDIMRRQLRMGKAVASLLENQHQSARELEENIMADEDNKANEVQADVSQFRVRRLRSPNYVELIELRG</sequence>
<gene>
    <name evidence="3" type="primary">RXLR21</name>
</gene>
<proteinExistence type="inferred from homology"/>
<keyword id="KW-1035">Host cytoplasm</keyword>
<keyword id="KW-1048">Host nucleus</keyword>
<keyword id="KW-0964">Secreted</keyword>
<keyword id="KW-0732">Signal</keyword>
<keyword id="KW-0843">Virulence</keyword>
<evidence type="ECO:0000255" key="1"/>
<evidence type="ECO:0000269" key="2">
    <source>
    </source>
</evidence>
<evidence type="ECO:0000303" key="3">
    <source>
    </source>
</evidence>
<evidence type="ECO:0000305" key="4"/>
<evidence type="ECO:0000305" key="5">
    <source>
    </source>
</evidence>
<comment type="function">
    <text evidence="2">Secreted effector that completely suppresses the host cell death induced by cell death-inducing proteins.</text>
</comment>
<comment type="subcellular location">
    <subcellularLocation>
        <location evidence="2">Secreted</location>
    </subcellularLocation>
    <subcellularLocation>
        <location evidence="2">Host nucleus</location>
    </subcellularLocation>
    <subcellularLocation>
        <location evidence="2">Host cytoplasm</location>
    </subcellularLocation>
</comment>
<comment type="domain">
    <text evidence="5">Has the canonical translocation RxLR motif, but lacks the canonical EER motif, which characterizes most oomycete effectors identified so far.</text>
</comment>
<comment type="similarity">
    <text evidence="4">Belongs to the RxLR effector family.</text>
</comment>
<name>RLR21_PLAVT</name>
<reference key="1">
    <citation type="journal article" date="2018" name="Front. Plant Sci.">
        <title>In planta functional analysis and subcellular localization of the oomycete pathogen Plasmopara viticola candidate RXLR effector repertoire.</title>
        <authorList>
            <person name="Liu Y."/>
            <person name="Lan X."/>
            <person name="Song S."/>
            <person name="Yin L."/>
            <person name="Dry I.B."/>
            <person name="Qu J."/>
            <person name="Xiang J."/>
            <person name="Lu J."/>
        </authorList>
    </citation>
    <scope>NUCLEOTIDE SEQUENCE [MRNA]</scope>
    <scope>DOMAIN</scope>
    <scope>FUNCTION</scope>
    <scope>SUBCELLULAR LOCATION</scope>
</reference>
<accession>P0CV00</accession>
<dbReference type="SMR" id="P0CV00"/>
<dbReference type="GO" id="GO:0005576">
    <property type="term" value="C:extracellular region"/>
    <property type="evidence" value="ECO:0007669"/>
    <property type="project" value="UniProtKB-SubCell"/>
</dbReference>
<dbReference type="GO" id="GO:0030430">
    <property type="term" value="C:host cell cytoplasm"/>
    <property type="evidence" value="ECO:0007669"/>
    <property type="project" value="UniProtKB-SubCell"/>
</dbReference>
<dbReference type="GO" id="GO:0042025">
    <property type="term" value="C:host cell nucleus"/>
    <property type="evidence" value="ECO:0007669"/>
    <property type="project" value="UniProtKB-SubCell"/>
</dbReference>
<feature type="signal peptide" evidence="1">
    <location>
        <begin position="1"/>
        <end position="21"/>
    </location>
</feature>
<feature type="chain" id="PRO_0000447909" description="Secreted RxLR effector protein 21">
    <location>
        <begin position="22"/>
        <end position="92"/>
    </location>
</feature>
<feature type="short sequence motif" description="RxLR" evidence="5">
    <location>
        <begin position="30"/>
        <end position="33"/>
    </location>
</feature>
<organism>
    <name type="scientific">Plasmopara viticola</name>
    <name type="common">Downy mildew of grapevine</name>
    <name type="synonym">Botrytis viticola</name>
    <dbReference type="NCBI Taxonomy" id="143451"/>
    <lineage>
        <taxon>Eukaryota</taxon>
        <taxon>Sar</taxon>
        <taxon>Stramenopiles</taxon>
        <taxon>Oomycota</taxon>
        <taxon>Peronosporales</taxon>
        <taxon>Peronosporaceae</taxon>
        <taxon>Plasmopara</taxon>
    </lineage>
</organism>